<organism>
    <name type="scientific">Pseudomonas entomophila (strain L48)</name>
    <dbReference type="NCBI Taxonomy" id="384676"/>
    <lineage>
        <taxon>Bacteria</taxon>
        <taxon>Pseudomonadati</taxon>
        <taxon>Pseudomonadota</taxon>
        <taxon>Gammaproteobacteria</taxon>
        <taxon>Pseudomonadales</taxon>
        <taxon>Pseudomonadaceae</taxon>
        <taxon>Pseudomonas</taxon>
    </lineage>
</organism>
<protein>
    <recommendedName>
        <fullName evidence="1">tRNA modification GTPase MnmE</fullName>
        <ecNumber evidence="1">3.6.-.-</ecNumber>
    </recommendedName>
</protein>
<gene>
    <name evidence="1" type="primary">mnmE</name>
    <name evidence="1" type="synonym">trmE</name>
    <name type="ordered locus">PSEEN5555</name>
</gene>
<dbReference type="EC" id="3.6.-.-" evidence="1"/>
<dbReference type="EMBL" id="CT573326">
    <property type="protein sequence ID" value="CAK18161.1"/>
    <property type="molecule type" value="Genomic_DNA"/>
</dbReference>
<dbReference type="RefSeq" id="WP_011536512.1">
    <property type="nucleotide sequence ID" value="NC_008027.1"/>
</dbReference>
<dbReference type="SMR" id="Q1I2H5"/>
<dbReference type="STRING" id="384676.PSEEN5555"/>
<dbReference type="GeneID" id="32808453"/>
<dbReference type="KEGG" id="pen:PSEEN5555"/>
<dbReference type="eggNOG" id="COG0486">
    <property type="taxonomic scope" value="Bacteria"/>
</dbReference>
<dbReference type="HOGENOM" id="CLU_019624_4_1_6"/>
<dbReference type="OrthoDB" id="9805918at2"/>
<dbReference type="Proteomes" id="UP000000658">
    <property type="component" value="Chromosome"/>
</dbReference>
<dbReference type="GO" id="GO:0005829">
    <property type="term" value="C:cytosol"/>
    <property type="evidence" value="ECO:0007669"/>
    <property type="project" value="TreeGrafter"/>
</dbReference>
<dbReference type="GO" id="GO:0005525">
    <property type="term" value="F:GTP binding"/>
    <property type="evidence" value="ECO:0007669"/>
    <property type="project" value="UniProtKB-UniRule"/>
</dbReference>
<dbReference type="GO" id="GO:0003924">
    <property type="term" value="F:GTPase activity"/>
    <property type="evidence" value="ECO:0007669"/>
    <property type="project" value="UniProtKB-UniRule"/>
</dbReference>
<dbReference type="GO" id="GO:0046872">
    <property type="term" value="F:metal ion binding"/>
    <property type="evidence" value="ECO:0007669"/>
    <property type="project" value="UniProtKB-KW"/>
</dbReference>
<dbReference type="GO" id="GO:0030488">
    <property type="term" value="P:tRNA methylation"/>
    <property type="evidence" value="ECO:0007669"/>
    <property type="project" value="TreeGrafter"/>
</dbReference>
<dbReference type="GO" id="GO:0002098">
    <property type="term" value="P:tRNA wobble uridine modification"/>
    <property type="evidence" value="ECO:0007669"/>
    <property type="project" value="TreeGrafter"/>
</dbReference>
<dbReference type="CDD" id="cd04164">
    <property type="entry name" value="trmE"/>
    <property type="match status" value="1"/>
</dbReference>
<dbReference type="CDD" id="cd14858">
    <property type="entry name" value="TrmE_N"/>
    <property type="match status" value="1"/>
</dbReference>
<dbReference type="FunFam" id="3.30.1360.120:FF:000001">
    <property type="entry name" value="tRNA modification GTPase MnmE"/>
    <property type="match status" value="1"/>
</dbReference>
<dbReference type="FunFam" id="3.40.50.300:FF:000249">
    <property type="entry name" value="tRNA modification GTPase MnmE"/>
    <property type="match status" value="1"/>
</dbReference>
<dbReference type="Gene3D" id="3.40.50.300">
    <property type="entry name" value="P-loop containing nucleotide triphosphate hydrolases"/>
    <property type="match status" value="1"/>
</dbReference>
<dbReference type="Gene3D" id="3.30.1360.120">
    <property type="entry name" value="Probable tRNA modification gtpase trme, domain 1"/>
    <property type="match status" value="1"/>
</dbReference>
<dbReference type="Gene3D" id="1.20.120.430">
    <property type="entry name" value="tRNA modification GTPase MnmE domain 2"/>
    <property type="match status" value="1"/>
</dbReference>
<dbReference type="HAMAP" id="MF_00379">
    <property type="entry name" value="GTPase_MnmE"/>
    <property type="match status" value="1"/>
</dbReference>
<dbReference type="InterPro" id="IPR031168">
    <property type="entry name" value="G_TrmE"/>
</dbReference>
<dbReference type="InterPro" id="IPR006073">
    <property type="entry name" value="GTP-bd"/>
</dbReference>
<dbReference type="InterPro" id="IPR018948">
    <property type="entry name" value="GTP-bd_TrmE_N"/>
</dbReference>
<dbReference type="InterPro" id="IPR004520">
    <property type="entry name" value="GTPase_MnmE"/>
</dbReference>
<dbReference type="InterPro" id="IPR027368">
    <property type="entry name" value="MnmE_dom2"/>
</dbReference>
<dbReference type="InterPro" id="IPR025867">
    <property type="entry name" value="MnmE_helical"/>
</dbReference>
<dbReference type="InterPro" id="IPR027417">
    <property type="entry name" value="P-loop_NTPase"/>
</dbReference>
<dbReference type="InterPro" id="IPR005225">
    <property type="entry name" value="Small_GTP-bd"/>
</dbReference>
<dbReference type="InterPro" id="IPR027266">
    <property type="entry name" value="TrmE/GcvT_dom1"/>
</dbReference>
<dbReference type="NCBIfam" id="TIGR00450">
    <property type="entry name" value="mnmE_trmE_thdF"/>
    <property type="match status" value="1"/>
</dbReference>
<dbReference type="NCBIfam" id="NF003661">
    <property type="entry name" value="PRK05291.1-3"/>
    <property type="match status" value="1"/>
</dbReference>
<dbReference type="NCBIfam" id="TIGR00231">
    <property type="entry name" value="small_GTP"/>
    <property type="match status" value="1"/>
</dbReference>
<dbReference type="PANTHER" id="PTHR42714">
    <property type="entry name" value="TRNA MODIFICATION GTPASE GTPBP3"/>
    <property type="match status" value="1"/>
</dbReference>
<dbReference type="PANTHER" id="PTHR42714:SF2">
    <property type="entry name" value="TRNA MODIFICATION GTPASE GTPBP3, MITOCHONDRIAL"/>
    <property type="match status" value="1"/>
</dbReference>
<dbReference type="Pfam" id="PF01926">
    <property type="entry name" value="MMR_HSR1"/>
    <property type="match status" value="1"/>
</dbReference>
<dbReference type="Pfam" id="PF12631">
    <property type="entry name" value="MnmE_helical"/>
    <property type="match status" value="1"/>
</dbReference>
<dbReference type="Pfam" id="PF10396">
    <property type="entry name" value="TrmE_N"/>
    <property type="match status" value="1"/>
</dbReference>
<dbReference type="SUPFAM" id="SSF52540">
    <property type="entry name" value="P-loop containing nucleoside triphosphate hydrolases"/>
    <property type="match status" value="1"/>
</dbReference>
<dbReference type="SUPFAM" id="SSF116878">
    <property type="entry name" value="TrmE connector domain"/>
    <property type="match status" value="1"/>
</dbReference>
<dbReference type="PROSITE" id="PS51709">
    <property type="entry name" value="G_TRME"/>
    <property type="match status" value="1"/>
</dbReference>
<name>MNME_PSEE4</name>
<proteinExistence type="inferred from homology"/>
<sequence>MNTVRETIAAIATAQGRGGVGIVRLSGPLASQAGQAITGRTLTPRHAHYGPFRDADGLVLDEGIALFFPGPNSFTGEDVLELQGHGGPVVMDMLLQRCLQLGCRLARPGEFSERAFLNDKLDLAQAEAIADLIEASSTQAARNALRSLQGAFSKRVHGLTEALIALRIYVEAAIDFPEEEIDFLADGHVLRMLDDVRSELSTVQREAGQGALLRDGMTVVIAGRPNAGKSSLLNQLAGREAAIVTDIAGTTRDVLREHIHIDGMPLHVVDTAGLRDTDDHVEKIGVERALKAIGEADRVLLVVDSTAPEASDPFALWPEFLDQRPDVAKVTLIRNKADLSGEHVGMEQSDDGHVTITLSAREDDMGLDLLRDHLKACMGYEQTAESSFSARRRHLEALRQASAHLEHGRAQLTLAGAGELLAEDLRQAQQALGEITGAFSSDDLLGRIFSSFCIGK</sequence>
<evidence type="ECO:0000255" key="1">
    <source>
        <dbReference type="HAMAP-Rule" id="MF_00379"/>
    </source>
</evidence>
<comment type="function">
    <text evidence="1">Exhibits a very high intrinsic GTPase hydrolysis rate. Involved in the addition of a carboxymethylaminomethyl (cmnm) group at the wobble position (U34) of certain tRNAs, forming tRNA-cmnm(5)s(2)U34.</text>
</comment>
<comment type="cofactor">
    <cofactor evidence="1">
        <name>K(+)</name>
        <dbReference type="ChEBI" id="CHEBI:29103"/>
    </cofactor>
    <text evidence="1">Binds 1 potassium ion per subunit.</text>
</comment>
<comment type="subunit">
    <text evidence="1">Homodimer. Heterotetramer of two MnmE and two MnmG subunits.</text>
</comment>
<comment type="subcellular location">
    <subcellularLocation>
        <location evidence="1">Cytoplasm</location>
    </subcellularLocation>
</comment>
<comment type="similarity">
    <text evidence="1">Belongs to the TRAFAC class TrmE-Era-EngA-EngB-Septin-like GTPase superfamily. TrmE GTPase family.</text>
</comment>
<feature type="chain" id="PRO_1000048855" description="tRNA modification GTPase MnmE">
    <location>
        <begin position="1"/>
        <end position="456"/>
    </location>
</feature>
<feature type="domain" description="TrmE-type G">
    <location>
        <begin position="216"/>
        <end position="379"/>
    </location>
</feature>
<feature type="binding site" evidence="1">
    <location>
        <position position="24"/>
    </location>
    <ligand>
        <name>(6S)-5-formyl-5,6,7,8-tetrahydrofolate</name>
        <dbReference type="ChEBI" id="CHEBI:57457"/>
    </ligand>
</feature>
<feature type="binding site" evidence="1">
    <location>
        <position position="81"/>
    </location>
    <ligand>
        <name>(6S)-5-formyl-5,6,7,8-tetrahydrofolate</name>
        <dbReference type="ChEBI" id="CHEBI:57457"/>
    </ligand>
</feature>
<feature type="binding site" evidence="1">
    <location>
        <position position="120"/>
    </location>
    <ligand>
        <name>(6S)-5-formyl-5,6,7,8-tetrahydrofolate</name>
        <dbReference type="ChEBI" id="CHEBI:57457"/>
    </ligand>
</feature>
<feature type="binding site" evidence="1">
    <location>
        <begin position="226"/>
        <end position="231"/>
    </location>
    <ligand>
        <name>GTP</name>
        <dbReference type="ChEBI" id="CHEBI:37565"/>
    </ligand>
</feature>
<feature type="binding site" evidence="1">
    <location>
        <position position="226"/>
    </location>
    <ligand>
        <name>K(+)</name>
        <dbReference type="ChEBI" id="CHEBI:29103"/>
    </ligand>
</feature>
<feature type="binding site" evidence="1">
    <location>
        <position position="230"/>
    </location>
    <ligand>
        <name>Mg(2+)</name>
        <dbReference type="ChEBI" id="CHEBI:18420"/>
    </ligand>
</feature>
<feature type="binding site" evidence="1">
    <location>
        <begin position="245"/>
        <end position="251"/>
    </location>
    <ligand>
        <name>GTP</name>
        <dbReference type="ChEBI" id="CHEBI:37565"/>
    </ligand>
</feature>
<feature type="binding site" evidence="1">
    <location>
        <position position="245"/>
    </location>
    <ligand>
        <name>K(+)</name>
        <dbReference type="ChEBI" id="CHEBI:29103"/>
    </ligand>
</feature>
<feature type="binding site" evidence="1">
    <location>
        <position position="247"/>
    </location>
    <ligand>
        <name>K(+)</name>
        <dbReference type="ChEBI" id="CHEBI:29103"/>
    </ligand>
</feature>
<feature type="binding site" evidence="1">
    <location>
        <position position="250"/>
    </location>
    <ligand>
        <name>K(+)</name>
        <dbReference type="ChEBI" id="CHEBI:29103"/>
    </ligand>
</feature>
<feature type="binding site" evidence="1">
    <location>
        <position position="251"/>
    </location>
    <ligand>
        <name>Mg(2+)</name>
        <dbReference type="ChEBI" id="CHEBI:18420"/>
    </ligand>
</feature>
<feature type="binding site" evidence="1">
    <location>
        <begin position="270"/>
        <end position="273"/>
    </location>
    <ligand>
        <name>GTP</name>
        <dbReference type="ChEBI" id="CHEBI:37565"/>
    </ligand>
</feature>
<feature type="binding site" evidence="1">
    <location>
        <begin position="335"/>
        <end position="338"/>
    </location>
    <ligand>
        <name>GTP</name>
        <dbReference type="ChEBI" id="CHEBI:37565"/>
    </ligand>
</feature>
<feature type="binding site" evidence="1">
    <location>
        <begin position="359"/>
        <end position="361"/>
    </location>
    <ligand>
        <name>GTP</name>
        <dbReference type="ChEBI" id="CHEBI:37565"/>
    </ligand>
</feature>
<feature type="binding site" evidence="1">
    <location>
        <position position="456"/>
    </location>
    <ligand>
        <name>(6S)-5-formyl-5,6,7,8-tetrahydrofolate</name>
        <dbReference type="ChEBI" id="CHEBI:57457"/>
    </ligand>
</feature>
<keyword id="KW-0963">Cytoplasm</keyword>
<keyword id="KW-0342">GTP-binding</keyword>
<keyword id="KW-0378">Hydrolase</keyword>
<keyword id="KW-0460">Magnesium</keyword>
<keyword id="KW-0479">Metal-binding</keyword>
<keyword id="KW-0547">Nucleotide-binding</keyword>
<keyword id="KW-0630">Potassium</keyword>
<keyword id="KW-0819">tRNA processing</keyword>
<reference key="1">
    <citation type="journal article" date="2006" name="Nat. Biotechnol.">
        <title>Complete genome sequence of the entomopathogenic and metabolically versatile soil bacterium Pseudomonas entomophila.</title>
        <authorList>
            <person name="Vodovar N."/>
            <person name="Vallenet D."/>
            <person name="Cruveiller S."/>
            <person name="Rouy Z."/>
            <person name="Barbe V."/>
            <person name="Acosta C."/>
            <person name="Cattolico L."/>
            <person name="Jubin C."/>
            <person name="Lajus A."/>
            <person name="Segurens B."/>
            <person name="Vacherie B."/>
            <person name="Wincker P."/>
            <person name="Weissenbach J."/>
            <person name="Lemaitre B."/>
            <person name="Medigue C."/>
            <person name="Boccard F."/>
        </authorList>
    </citation>
    <scope>NUCLEOTIDE SEQUENCE [LARGE SCALE GENOMIC DNA]</scope>
    <source>
        <strain>L48</strain>
    </source>
</reference>
<accession>Q1I2H5</accession>